<comment type="function">
    <text evidence="1">Catalyzes the radical-mediated insertion of two sulfur atoms into the C-6 and C-8 positions of the octanoyl moiety bound to the lipoyl domains of lipoate-dependent enzymes, thereby converting the octanoylated domains into lipoylated derivatives.</text>
</comment>
<comment type="catalytic activity">
    <reaction evidence="1">
        <text>[[Fe-S] cluster scaffold protein carrying a second [4Fe-4S](2+) cluster] + N(6)-octanoyl-L-lysyl-[protein] + 2 oxidized [2Fe-2S]-[ferredoxin] + 2 S-adenosyl-L-methionine + 4 H(+) = [[Fe-S] cluster scaffold protein] + N(6)-[(R)-dihydrolipoyl]-L-lysyl-[protein] + 4 Fe(3+) + 2 hydrogen sulfide + 2 5'-deoxyadenosine + 2 L-methionine + 2 reduced [2Fe-2S]-[ferredoxin]</text>
        <dbReference type="Rhea" id="RHEA:16585"/>
        <dbReference type="Rhea" id="RHEA-COMP:9928"/>
        <dbReference type="Rhea" id="RHEA-COMP:10000"/>
        <dbReference type="Rhea" id="RHEA-COMP:10001"/>
        <dbReference type="Rhea" id="RHEA-COMP:10475"/>
        <dbReference type="Rhea" id="RHEA-COMP:14568"/>
        <dbReference type="Rhea" id="RHEA-COMP:14569"/>
        <dbReference type="ChEBI" id="CHEBI:15378"/>
        <dbReference type="ChEBI" id="CHEBI:17319"/>
        <dbReference type="ChEBI" id="CHEBI:29034"/>
        <dbReference type="ChEBI" id="CHEBI:29919"/>
        <dbReference type="ChEBI" id="CHEBI:33722"/>
        <dbReference type="ChEBI" id="CHEBI:33737"/>
        <dbReference type="ChEBI" id="CHEBI:33738"/>
        <dbReference type="ChEBI" id="CHEBI:57844"/>
        <dbReference type="ChEBI" id="CHEBI:59789"/>
        <dbReference type="ChEBI" id="CHEBI:78809"/>
        <dbReference type="ChEBI" id="CHEBI:83100"/>
        <dbReference type="EC" id="2.8.1.8"/>
    </reaction>
</comment>
<comment type="cofactor">
    <cofactor evidence="1">
        <name>[4Fe-4S] cluster</name>
        <dbReference type="ChEBI" id="CHEBI:49883"/>
    </cofactor>
    <text evidence="1">Binds 2 [4Fe-4S] clusters per subunit. One cluster is coordinated with 3 cysteines and an exchangeable S-adenosyl-L-methionine.</text>
</comment>
<comment type="pathway">
    <text evidence="1">Protein modification; protein lipoylation via endogenous pathway; protein N(6)-(lipoyl)lysine from octanoyl-[acyl-carrier-protein]: step 2/2.</text>
</comment>
<comment type="subcellular location">
    <subcellularLocation>
        <location evidence="1">Cytoplasm</location>
    </subcellularLocation>
</comment>
<comment type="similarity">
    <text evidence="1">Belongs to the radical SAM superfamily. Lipoyl synthase family.</text>
</comment>
<reference key="1">
    <citation type="submission" date="2006-12" db="EMBL/GenBank/DDBJ databases">
        <title>Complete sequence of Halorhodospira halophila SL1.</title>
        <authorList>
            <consortium name="US DOE Joint Genome Institute"/>
            <person name="Copeland A."/>
            <person name="Lucas S."/>
            <person name="Lapidus A."/>
            <person name="Barry K."/>
            <person name="Detter J.C."/>
            <person name="Glavina del Rio T."/>
            <person name="Hammon N."/>
            <person name="Israni S."/>
            <person name="Dalin E."/>
            <person name="Tice H."/>
            <person name="Pitluck S."/>
            <person name="Saunders E."/>
            <person name="Brettin T."/>
            <person name="Bruce D."/>
            <person name="Han C."/>
            <person name="Tapia R."/>
            <person name="Schmutz J."/>
            <person name="Larimer F."/>
            <person name="Land M."/>
            <person name="Hauser L."/>
            <person name="Kyrpides N."/>
            <person name="Mikhailova N."/>
            <person name="Hoff W."/>
            <person name="Richardson P."/>
        </authorList>
    </citation>
    <scope>NUCLEOTIDE SEQUENCE [LARGE SCALE GENOMIC DNA]</scope>
    <source>
        <strain>DSM 244 / SL1</strain>
    </source>
</reference>
<gene>
    <name evidence="1" type="primary">lipA</name>
    <name type="ordered locus">Hhal_0116</name>
</gene>
<proteinExistence type="inferred from homology"/>
<protein>
    <recommendedName>
        <fullName evidence="1">Lipoyl synthase</fullName>
        <ecNumber evidence="1">2.8.1.8</ecNumber>
    </recommendedName>
    <alternativeName>
        <fullName evidence="1">Lip-syn</fullName>
        <shortName evidence="1">LS</shortName>
    </alternativeName>
    <alternativeName>
        <fullName evidence="1">Lipoate synthase</fullName>
    </alternativeName>
    <alternativeName>
        <fullName evidence="1">Lipoic acid synthase</fullName>
    </alternativeName>
    <alternativeName>
        <fullName evidence="1">Sulfur insertion protein LipA</fullName>
    </alternativeName>
</protein>
<keyword id="KW-0004">4Fe-4S</keyword>
<keyword id="KW-0963">Cytoplasm</keyword>
<keyword id="KW-0408">Iron</keyword>
<keyword id="KW-0411">Iron-sulfur</keyword>
<keyword id="KW-0479">Metal-binding</keyword>
<keyword id="KW-1185">Reference proteome</keyword>
<keyword id="KW-0949">S-adenosyl-L-methionine</keyword>
<keyword id="KW-0808">Transferase</keyword>
<organism>
    <name type="scientific">Halorhodospira halophila (strain DSM 244 / SL1)</name>
    <name type="common">Ectothiorhodospira halophila (strain DSM 244 / SL1)</name>
    <dbReference type="NCBI Taxonomy" id="349124"/>
    <lineage>
        <taxon>Bacteria</taxon>
        <taxon>Pseudomonadati</taxon>
        <taxon>Pseudomonadota</taxon>
        <taxon>Gammaproteobacteria</taxon>
        <taxon>Chromatiales</taxon>
        <taxon>Ectothiorhodospiraceae</taxon>
        <taxon>Halorhodospira</taxon>
    </lineage>
</organism>
<name>LIPA_HALHL</name>
<feature type="chain" id="PRO_0000325263" description="Lipoyl synthase">
    <location>
        <begin position="1"/>
        <end position="334"/>
    </location>
</feature>
<feature type="domain" description="Radical SAM core" evidence="2">
    <location>
        <begin position="83"/>
        <end position="301"/>
    </location>
</feature>
<feature type="binding site" evidence="1">
    <location>
        <position position="71"/>
    </location>
    <ligand>
        <name>[4Fe-4S] cluster</name>
        <dbReference type="ChEBI" id="CHEBI:49883"/>
        <label>1</label>
    </ligand>
</feature>
<feature type="binding site" evidence="1">
    <location>
        <position position="76"/>
    </location>
    <ligand>
        <name>[4Fe-4S] cluster</name>
        <dbReference type="ChEBI" id="CHEBI:49883"/>
        <label>1</label>
    </ligand>
</feature>
<feature type="binding site" evidence="1">
    <location>
        <position position="82"/>
    </location>
    <ligand>
        <name>[4Fe-4S] cluster</name>
        <dbReference type="ChEBI" id="CHEBI:49883"/>
        <label>1</label>
    </ligand>
</feature>
<feature type="binding site" evidence="1">
    <location>
        <position position="97"/>
    </location>
    <ligand>
        <name>[4Fe-4S] cluster</name>
        <dbReference type="ChEBI" id="CHEBI:49883"/>
        <label>2</label>
        <note>4Fe-4S-S-AdoMet</note>
    </ligand>
</feature>
<feature type="binding site" evidence="1">
    <location>
        <position position="101"/>
    </location>
    <ligand>
        <name>[4Fe-4S] cluster</name>
        <dbReference type="ChEBI" id="CHEBI:49883"/>
        <label>2</label>
        <note>4Fe-4S-S-AdoMet</note>
    </ligand>
</feature>
<feature type="binding site" evidence="1">
    <location>
        <position position="104"/>
    </location>
    <ligand>
        <name>[4Fe-4S] cluster</name>
        <dbReference type="ChEBI" id="CHEBI:49883"/>
        <label>2</label>
        <note>4Fe-4S-S-AdoMet</note>
    </ligand>
</feature>
<feature type="binding site" evidence="1">
    <location>
        <position position="312"/>
    </location>
    <ligand>
        <name>[4Fe-4S] cluster</name>
        <dbReference type="ChEBI" id="CHEBI:49883"/>
        <label>1</label>
    </ligand>
</feature>
<sequence length="334" mass="36704">MSEFKGIPVSSGSVVERDGVRTIKDGVKRRDDGQGAVRRRKPQWLKARAPGGEGYRSVRGIVHDHHLSTVCEESHCPNLGECWSHGTATFMVLGSVCTRTCRFCSVDTGNPKGRLDPQEPEHCAESVRLMGLRYVVLTSVDRDDLPDGGAEHYAQCVRAIKADNPDTAVEALTPDFRGDEEAVRTVVDSGLEVFAHNVEVVRRLSPQVRDPRAGYEQSLAVLQVAKRLRPGVLTKSSLMVGLGETDAEIDEAFDDLLRAEVDIVTLGQYLQPTRNHLPVERFVSPDEFEALRQEGLRRGFREVVAGPLVRSSYRADRVLEGNNVGLPSVGPDVG</sequence>
<dbReference type="EC" id="2.8.1.8" evidence="1"/>
<dbReference type="EMBL" id="CP000544">
    <property type="protein sequence ID" value="ABM60910.1"/>
    <property type="molecule type" value="Genomic_DNA"/>
</dbReference>
<dbReference type="RefSeq" id="WP_011812933.1">
    <property type="nucleotide sequence ID" value="NC_008789.1"/>
</dbReference>
<dbReference type="SMR" id="A1WT98"/>
<dbReference type="STRING" id="349124.Hhal_0116"/>
<dbReference type="KEGG" id="hha:Hhal_0116"/>
<dbReference type="eggNOG" id="COG0320">
    <property type="taxonomic scope" value="Bacteria"/>
</dbReference>
<dbReference type="HOGENOM" id="CLU_033144_2_0_6"/>
<dbReference type="OrthoDB" id="9787898at2"/>
<dbReference type="UniPathway" id="UPA00538">
    <property type="reaction ID" value="UER00593"/>
</dbReference>
<dbReference type="Proteomes" id="UP000000647">
    <property type="component" value="Chromosome"/>
</dbReference>
<dbReference type="GO" id="GO:0005737">
    <property type="term" value="C:cytoplasm"/>
    <property type="evidence" value="ECO:0007669"/>
    <property type="project" value="UniProtKB-SubCell"/>
</dbReference>
<dbReference type="GO" id="GO:0051539">
    <property type="term" value="F:4 iron, 4 sulfur cluster binding"/>
    <property type="evidence" value="ECO:0007669"/>
    <property type="project" value="UniProtKB-UniRule"/>
</dbReference>
<dbReference type="GO" id="GO:0016992">
    <property type="term" value="F:lipoate synthase activity"/>
    <property type="evidence" value="ECO:0007669"/>
    <property type="project" value="UniProtKB-UniRule"/>
</dbReference>
<dbReference type="GO" id="GO:0046872">
    <property type="term" value="F:metal ion binding"/>
    <property type="evidence" value="ECO:0007669"/>
    <property type="project" value="UniProtKB-KW"/>
</dbReference>
<dbReference type="CDD" id="cd01335">
    <property type="entry name" value="Radical_SAM"/>
    <property type="match status" value="1"/>
</dbReference>
<dbReference type="FunFam" id="3.20.20.70:FF:000040">
    <property type="entry name" value="Lipoyl synthase"/>
    <property type="match status" value="1"/>
</dbReference>
<dbReference type="Gene3D" id="3.20.20.70">
    <property type="entry name" value="Aldolase class I"/>
    <property type="match status" value="1"/>
</dbReference>
<dbReference type="HAMAP" id="MF_00206">
    <property type="entry name" value="Lipoyl_synth"/>
    <property type="match status" value="1"/>
</dbReference>
<dbReference type="InterPro" id="IPR013785">
    <property type="entry name" value="Aldolase_TIM"/>
</dbReference>
<dbReference type="InterPro" id="IPR006638">
    <property type="entry name" value="Elp3/MiaA/NifB-like_rSAM"/>
</dbReference>
<dbReference type="InterPro" id="IPR031691">
    <property type="entry name" value="LIAS_N"/>
</dbReference>
<dbReference type="InterPro" id="IPR003698">
    <property type="entry name" value="Lipoyl_synth"/>
</dbReference>
<dbReference type="InterPro" id="IPR007197">
    <property type="entry name" value="rSAM"/>
</dbReference>
<dbReference type="NCBIfam" id="TIGR00510">
    <property type="entry name" value="lipA"/>
    <property type="match status" value="1"/>
</dbReference>
<dbReference type="NCBIfam" id="NF004019">
    <property type="entry name" value="PRK05481.1"/>
    <property type="match status" value="1"/>
</dbReference>
<dbReference type="NCBIfam" id="NF009544">
    <property type="entry name" value="PRK12928.1"/>
    <property type="match status" value="1"/>
</dbReference>
<dbReference type="PANTHER" id="PTHR10949">
    <property type="entry name" value="LIPOYL SYNTHASE"/>
    <property type="match status" value="1"/>
</dbReference>
<dbReference type="PANTHER" id="PTHR10949:SF0">
    <property type="entry name" value="LIPOYL SYNTHASE, MITOCHONDRIAL"/>
    <property type="match status" value="1"/>
</dbReference>
<dbReference type="Pfam" id="PF16881">
    <property type="entry name" value="LIAS_N"/>
    <property type="match status" value="1"/>
</dbReference>
<dbReference type="Pfam" id="PF04055">
    <property type="entry name" value="Radical_SAM"/>
    <property type="match status" value="1"/>
</dbReference>
<dbReference type="PIRSF" id="PIRSF005963">
    <property type="entry name" value="Lipoyl_synth"/>
    <property type="match status" value="1"/>
</dbReference>
<dbReference type="SFLD" id="SFLDF00271">
    <property type="entry name" value="lipoyl_synthase"/>
    <property type="match status" value="1"/>
</dbReference>
<dbReference type="SFLD" id="SFLDS00029">
    <property type="entry name" value="Radical_SAM"/>
    <property type="match status" value="1"/>
</dbReference>
<dbReference type="SMART" id="SM00729">
    <property type="entry name" value="Elp3"/>
    <property type="match status" value="1"/>
</dbReference>
<dbReference type="SUPFAM" id="SSF102114">
    <property type="entry name" value="Radical SAM enzymes"/>
    <property type="match status" value="1"/>
</dbReference>
<dbReference type="PROSITE" id="PS51918">
    <property type="entry name" value="RADICAL_SAM"/>
    <property type="match status" value="1"/>
</dbReference>
<accession>A1WT98</accession>
<evidence type="ECO:0000255" key="1">
    <source>
        <dbReference type="HAMAP-Rule" id="MF_00206"/>
    </source>
</evidence>
<evidence type="ECO:0000255" key="2">
    <source>
        <dbReference type="PROSITE-ProRule" id="PRU01266"/>
    </source>
</evidence>